<comment type="function">
    <text evidence="4">Monoterpene synthase that catalyzes the formation of geraniol from geranyl diphosphate.</text>
</comment>
<comment type="catalytic activity">
    <reaction evidence="4">
        <text>(2E)-geranyl diphosphate + H2O = (2E)-geraniol + diphosphate</text>
        <dbReference type="Rhea" id="RHEA:32679"/>
        <dbReference type="ChEBI" id="CHEBI:15377"/>
        <dbReference type="ChEBI" id="CHEBI:17447"/>
        <dbReference type="ChEBI" id="CHEBI:33019"/>
        <dbReference type="ChEBI" id="CHEBI:58057"/>
        <dbReference type="EC" id="3.1.7.11"/>
    </reaction>
</comment>
<comment type="cofactor">
    <cofactor evidence="4">
        <name>Mg(2+)</name>
        <dbReference type="ChEBI" id="CHEBI:18420"/>
    </cofactor>
    <cofactor evidence="4">
        <name>Mn(2+)</name>
        <dbReference type="ChEBI" id="CHEBI:29035"/>
    </cofactor>
    <text evidence="4">Binds 3 Mg(2+) or Mn(2+) ions per subunit.</text>
</comment>
<comment type="biophysicochemical properties">
    <kinetics>
        <KM evidence="4">55.8 uM for geranyl diphosphate</KM>
    </kinetics>
    <phDependence>
        <text evidence="4">Optimum pH is 7.</text>
    </phDependence>
</comment>
<comment type="pathway">
    <text>Secondary metabolite biosynthesis; terpenoid biosynthesis.</text>
</comment>
<comment type="subunit">
    <text evidence="2">Homodimer.</text>
</comment>
<comment type="subcellular location">
    <subcellularLocation>
        <location evidence="3">Plastid</location>
        <location evidence="3">Chloroplast</location>
    </subcellularLocation>
</comment>
<comment type="tissue specificity">
    <text evidence="4">Expressed in the oil cells of the leaves.</text>
</comment>
<comment type="domain">
    <text evidence="1">The Asp-Asp-Xaa-Xaa-Asp/Glu (DDXXD/E) motif is important for the catalytic activity, presumably through binding to Mg(2+).</text>
</comment>
<comment type="miscellaneous">
    <text>Exclusively observed in the geraniol chemotype of this organism.</text>
</comment>
<comment type="similarity">
    <text evidence="5">Belongs to the terpene synthase family. Tpsb subfamily.</text>
</comment>
<feature type="transit peptide" description="Chloroplast" evidence="3">
    <location>
        <begin position="1"/>
        <end position="50"/>
    </location>
</feature>
<feature type="chain" id="PRO_0000418927" description="Geraniol synthase, chloroplastic">
    <location>
        <begin position="51"/>
        <end position="603"/>
    </location>
</feature>
<feature type="short sequence motif" description="DDXXD motif" evidence="1">
    <location>
        <begin position="338"/>
        <end position="342"/>
    </location>
</feature>
<feature type="binding site" evidence="1">
    <location>
        <position position="301"/>
    </location>
    <ligand>
        <name>(2E)-geranyl diphosphate</name>
        <dbReference type="ChEBI" id="CHEBI:58057"/>
    </ligand>
</feature>
<feature type="binding site" evidence="1">
    <location>
        <position position="338"/>
    </location>
    <ligand>
        <name>(2E)-geranyl diphosphate</name>
        <dbReference type="ChEBI" id="CHEBI:58057"/>
    </ligand>
</feature>
<feature type="binding site" evidence="1">
    <location>
        <position position="338"/>
    </location>
    <ligand>
        <name>Mg(2+)</name>
        <dbReference type="ChEBI" id="CHEBI:18420"/>
        <label>1</label>
    </ligand>
</feature>
<feature type="binding site" evidence="1">
    <location>
        <position position="338"/>
    </location>
    <ligand>
        <name>Mg(2+)</name>
        <dbReference type="ChEBI" id="CHEBI:18420"/>
        <label>2</label>
    </ligand>
</feature>
<feature type="binding site" evidence="1">
    <location>
        <position position="342"/>
    </location>
    <ligand>
        <name>(2E)-geranyl diphosphate</name>
        <dbReference type="ChEBI" id="CHEBI:58057"/>
    </ligand>
</feature>
<feature type="binding site" evidence="1">
    <location>
        <position position="342"/>
    </location>
    <ligand>
        <name>Mg(2+)</name>
        <dbReference type="ChEBI" id="CHEBI:18420"/>
        <label>1</label>
    </ligand>
</feature>
<feature type="binding site" evidence="1">
    <location>
        <position position="342"/>
    </location>
    <ligand>
        <name>Mg(2+)</name>
        <dbReference type="ChEBI" id="CHEBI:18420"/>
        <label>2</label>
    </ligand>
</feature>
<feature type="binding site" evidence="1">
    <location>
        <position position="479"/>
    </location>
    <ligand>
        <name>(2E)-geranyl diphosphate</name>
        <dbReference type="ChEBI" id="CHEBI:58057"/>
    </ligand>
</feature>
<feature type="binding site" evidence="1">
    <location>
        <position position="482"/>
    </location>
    <ligand>
        <name>(2E)-geranyl diphosphate</name>
        <dbReference type="ChEBI" id="CHEBI:58057"/>
    </ligand>
</feature>
<feature type="binding site" evidence="1">
    <location>
        <position position="482"/>
    </location>
    <ligand>
        <name>Mg(2+)</name>
        <dbReference type="ChEBI" id="CHEBI:18420"/>
        <label>3</label>
    </ligand>
</feature>
<feature type="binding site" evidence="1">
    <location>
        <position position="486"/>
    </location>
    <ligand>
        <name>Mg(2+)</name>
        <dbReference type="ChEBI" id="CHEBI:18420"/>
        <label>3</label>
    </ligand>
</feature>
<feature type="binding site" evidence="1">
    <location>
        <position position="490"/>
    </location>
    <ligand>
        <name>Mg(2+)</name>
        <dbReference type="ChEBI" id="CHEBI:18420"/>
        <label>3</label>
    </ligand>
</feature>
<keyword id="KW-0150">Chloroplast</keyword>
<keyword id="KW-0378">Hydrolase</keyword>
<keyword id="KW-0460">Magnesium</keyword>
<keyword id="KW-0464">Manganese</keyword>
<keyword id="KW-0479">Metal-binding</keyword>
<keyword id="KW-0934">Plastid</keyword>
<keyword id="KW-0809">Transit peptide</keyword>
<name>GERS_CINTE</name>
<sequence length="603" mass="69081">MALQMIAPFLSSFLPNPRHSLAAHGLTHQKCVSKHISCSTTTPTYSTTVPRRSGNYKPSIWDYDFVQSLGSGYKVEAHGTRVKKLKEVVKHLLKETDSSLAQIELIDKLRRLGLRWLFKNEIKQVLYTISSDNTSIEMRKDLHAVSTRFRLLRQHGYKVSTDVFNDFKDEKGCFKPSLSMDIKGMLSLYEASHLAFQGETVLDEARAFVSTHLMDIKENIDPILHKKVEHALDMPLHWRLEKLEARWYMDIYMREEGMNSSLLELAMLHFNIVQTTFQTNLKSLSRWWKDLGLGEQLSFTRDRLVECFFWAAAMTPEPQFGRCQEVVAKVAQLIIIIDDIYDVYGTVDELELFTNAIDRWDLEAMEQLPEYMKTCFLALYNSINEIGYDILKEEGRNVIPYLRNTWTELCKAFLVEAKWYSSGYTPTLEEYLQTSWISIGSLPMQTYVFALLGKNLAPESSDFAEKISDILRLGGMMIRLPDDLGTSTDELKRGDVPKSIQCYMHEAGVTEDVARDHIMGLFQETWKKLNEYLVESSLPHAFIDHAMNLGRVSYCTYKHGDGFSDGFGDPGSQEKKMFMSLFAEPLQVDEAKGISFYVDGGSA</sequence>
<reference key="1">
    <citation type="journal article" date="2005" name="Phytochemistry">
        <title>A geraniol-synthase gene from Cinnamomum tenuipilum.</title>
        <authorList>
            <person name="Yang T."/>
            <person name="Li J."/>
            <person name="Wang H.-X."/>
            <person name="Zeng Y."/>
        </authorList>
    </citation>
    <scope>NUCLEOTIDE SEQUENCE [MRNA]</scope>
    <scope>FUNCTION</scope>
    <scope>CATALYTIC ACTIVITY</scope>
    <scope>BIOPHYSICOCHEMICAL PROPERTIES</scope>
    <scope>TISSUE SPECIFICITY</scope>
    <scope>COFACTOR</scope>
</reference>
<evidence type="ECO:0000250" key="1">
    <source>
        <dbReference type="UniProtKB" id="Q40577"/>
    </source>
</evidence>
<evidence type="ECO:0000250" key="2">
    <source>
        <dbReference type="UniProtKB" id="Q6USK1"/>
    </source>
</evidence>
<evidence type="ECO:0000255" key="3"/>
<evidence type="ECO:0000269" key="4">
    <source>
    </source>
</evidence>
<evidence type="ECO:0000305" key="5"/>
<gene>
    <name type="primary">GerS</name>
</gene>
<protein>
    <recommendedName>
        <fullName>Geraniol synthase, chloroplastic</fullName>
        <shortName>CtGES</shortName>
        <ecNumber evidence="4">3.1.7.11</ecNumber>
    </recommendedName>
</protein>
<accession>Q8GUE4</accession>
<proteinExistence type="evidence at protein level"/>
<dbReference type="EC" id="3.1.7.11" evidence="4"/>
<dbReference type="EMBL" id="AJ457070">
    <property type="protein sequence ID" value="CAD29734.2"/>
    <property type="molecule type" value="mRNA"/>
</dbReference>
<dbReference type="SMR" id="Q8GUE4"/>
<dbReference type="KEGG" id="ag:CAD29734"/>
<dbReference type="BioCyc" id="MetaCyc:MONOMER-12834"/>
<dbReference type="BRENDA" id="3.1.7.11">
    <property type="organism ID" value="12920"/>
</dbReference>
<dbReference type="UniPathway" id="UPA00213"/>
<dbReference type="GO" id="GO:0009507">
    <property type="term" value="C:chloroplast"/>
    <property type="evidence" value="ECO:0007669"/>
    <property type="project" value="UniProtKB-SubCell"/>
</dbReference>
<dbReference type="GO" id="GO:0016787">
    <property type="term" value="F:hydrolase activity"/>
    <property type="evidence" value="ECO:0000314"/>
    <property type="project" value="UniProtKB"/>
</dbReference>
<dbReference type="GO" id="GO:0000287">
    <property type="term" value="F:magnesium ion binding"/>
    <property type="evidence" value="ECO:0000314"/>
    <property type="project" value="UniProtKB"/>
</dbReference>
<dbReference type="GO" id="GO:0030145">
    <property type="term" value="F:manganese ion binding"/>
    <property type="evidence" value="ECO:0000314"/>
    <property type="project" value="UniProtKB"/>
</dbReference>
<dbReference type="GO" id="GO:0042803">
    <property type="term" value="F:protein homodimerization activity"/>
    <property type="evidence" value="ECO:0000250"/>
    <property type="project" value="UniProtKB"/>
</dbReference>
<dbReference type="GO" id="GO:0010333">
    <property type="term" value="F:terpene synthase activity"/>
    <property type="evidence" value="ECO:0007669"/>
    <property type="project" value="InterPro"/>
</dbReference>
<dbReference type="GO" id="GO:0016102">
    <property type="term" value="P:diterpenoid biosynthetic process"/>
    <property type="evidence" value="ECO:0007669"/>
    <property type="project" value="InterPro"/>
</dbReference>
<dbReference type="GO" id="GO:0033383">
    <property type="term" value="P:geranyl diphosphate metabolic process"/>
    <property type="evidence" value="ECO:0000314"/>
    <property type="project" value="UniProtKB"/>
</dbReference>
<dbReference type="CDD" id="cd00684">
    <property type="entry name" value="Terpene_cyclase_plant_C1"/>
    <property type="match status" value="1"/>
</dbReference>
<dbReference type="FunFam" id="1.10.600.10:FF:000007">
    <property type="entry name" value="Isoprene synthase, chloroplastic"/>
    <property type="match status" value="1"/>
</dbReference>
<dbReference type="FunFam" id="1.50.10.130:FF:000001">
    <property type="entry name" value="Isoprene synthase, chloroplastic"/>
    <property type="match status" value="1"/>
</dbReference>
<dbReference type="Gene3D" id="1.10.600.10">
    <property type="entry name" value="Farnesyl Diphosphate Synthase"/>
    <property type="match status" value="1"/>
</dbReference>
<dbReference type="Gene3D" id="1.50.10.130">
    <property type="entry name" value="Terpene synthase, N-terminal domain"/>
    <property type="match status" value="1"/>
</dbReference>
<dbReference type="InterPro" id="IPR008949">
    <property type="entry name" value="Isoprenoid_synthase_dom_sf"/>
</dbReference>
<dbReference type="InterPro" id="IPR034741">
    <property type="entry name" value="Terpene_cyclase-like_1_C"/>
</dbReference>
<dbReference type="InterPro" id="IPR044814">
    <property type="entry name" value="Terpene_cyclase_plant_C1"/>
</dbReference>
<dbReference type="InterPro" id="IPR001906">
    <property type="entry name" value="Terpene_synth_N"/>
</dbReference>
<dbReference type="InterPro" id="IPR036965">
    <property type="entry name" value="Terpene_synth_N_sf"/>
</dbReference>
<dbReference type="InterPro" id="IPR050148">
    <property type="entry name" value="Terpene_synthase-like"/>
</dbReference>
<dbReference type="InterPro" id="IPR005630">
    <property type="entry name" value="Terpene_synthase_metal-bd"/>
</dbReference>
<dbReference type="InterPro" id="IPR008930">
    <property type="entry name" value="Terpenoid_cyclase/PrenylTrfase"/>
</dbReference>
<dbReference type="PANTHER" id="PTHR31225">
    <property type="entry name" value="OS04G0344100 PROTEIN-RELATED"/>
    <property type="match status" value="1"/>
</dbReference>
<dbReference type="PANTHER" id="PTHR31225:SF252">
    <property type="entry name" value="TERPENE SYNTHASE 12-RELATED"/>
    <property type="match status" value="1"/>
</dbReference>
<dbReference type="Pfam" id="PF01397">
    <property type="entry name" value="Terpene_synth"/>
    <property type="match status" value="1"/>
</dbReference>
<dbReference type="Pfam" id="PF03936">
    <property type="entry name" value="Terpene_synth_C"/>
    <property type="match status" value="1"/>
</dbReference>
<dbReference type="SFLD" id="SFLDS00005">
    <property type="entry name" value="Isoprenoid_Synthase_Type_I"/>
    <property type="match status" value="1"/>
</dbReference>
<dbReference type="SFLD" id="SFLDG01019">
    <property type="entry name" value="Terpene_Cyclase_Like_1_C_Termi"/>
    <property type="match status" value="1"/>
</dbReference>
<dbReference type="SUPFAM" id="SSF48239">
    <property type="entry name" value="Terpenoid cyclases/Protein prenyltransferases"/>
    <property type="match status" value="1"/>
</dbReference>
<dbReference type="SUPFAM" id="SSF48576">
    <property type="entry name" value="Terpenoid synthases"/>
    <property type="match status" value="1"/>
</dbReference>
<organism>
    <name type="scientific">Cinnamomum tenuipile</name>
    <name type="common">Alseodaphne mollis</name>
    <dbReference type="NCBI Taxonomy" id="192326"/>
    <lineage>
        <taxon>Eukaryota</taxon>
        <taxon>Viridiplantae</taxon>
        <taxon>Streptophyta</taxon>
        <taxon>Embryophyta</taxon>
        <taxon>Tracheophyta</taxon>
        <taxon>Spermatophyta</taxon>
        <taxon>Magnoliopsida</taxon>
        <taxon>Magnoliidae</taxon>
        <taxon>Laurales</taxon>
        <taxon>Lauraceae</taxon>
        <taxon>Cinnamomum</taxon>
    </lineage>
</organism>